<dbReference type="EMBL" id="CP001052">
    <property type="protein sequence ID" value="ACD15182.1"/>
    <property type="molecule type" value="Genomic_DNA"/>
</dbReference>
<dbReference type="RefSeq" id="WP_012431818.1">
    <property type="nucleotide sequence ID" value="NC_010681.1"/>
</dbReference>
<dbReference type="SMR" id="B2T077"/>
<dbReference type="STRING" id="398527.Bphyt_0759"/>
<dbReference type="GeneID" id="97305679"/>
<dbReference type="KEGG" id="bpy:Bphyt_0759"/>
<dbReference type="eggNOG" id="COG0823">
    <property type="taxonomic scope" value="Bacteria"/>
</dbReference>
<dbReference type="HOGENOM" id="CLU_047123_0_0_4"/>
<dbReference type="OrthoDB" id="9802240at2"/>
<dbReference type="Proteomes" id="UP000001739">
    <property type="component" value="Chromosome 1"/>
</dbReference>
<dbReference type="GO" id="GO:0042597">
    <property type="term" value="C:periplasmic space"/>
    <property type="evidence" value="ECO:0007669"/>
    <property type="project" value="UniProtKB-SubCell"/>
</dbReference>
<dbReference type="GO" id="GO:0051301">
    <property type="term" value="P:cell division"/>
    <property type="evidence" value="ECO:0007669"/>
    <property type="project" value="UniProtKB-UniRule"/>
</dbReference>
<dbReference type="GO" id="GO:0017038">
    <property type="term" value="P:protein import"/>
    <property type="evidence" value="ECO:0007669"/>
    <property type="project" value="InterPro"/>
</dbReference>
<dbReference type="Gene3D" id="2.120.10.30">
    <property type="entry name" value="TolB, C-terminal domain"/>
    <property type="match status" value="1"/>
</dbReference>
<dbReference type="Gene3D" id="3.40.50.10070">
    <property type="entry name" value="TolB, N-terminal domain"/>
    <property type="match status" value="1"/>
</dbReference>
<dbReference type="HAMAP" id="MF_00671">
    <property type="entry name" value="TolB"/>
    <property type="match status" value="1"/>
</dbReference>
<dbReference type="InterPro" id="IPR011042">
    <property type="entry name" value="6-blade_b-propeller_TolB-like"/>
</dbReference>
<dbReference type="InterPro" id="IPR011659">
    <property type="entry name" value="PD40"/>
</dbReference>
<dbReference type="InterPro" id="IPR014167">
    <property type="entry name" value="Tol-Pal_TolB"/>
</dbReference>
<dbReference type="InterPro" id="IPR007195">
    <property type="entry name" value="TolB_N"/>
</dbReference>
<dbReference type="NCBIfam" id="TIGR02800">
    <property type="entry name" value="propeller_TolB"/>
    <property type="match status" value="1"/>
</dbReference>
<dbReference type="PANTHER" id="PTHR36842:SF1">
    <property type="entry name" value="PROTEIN TOLB"/>
    <property type="match status" value="1"/>
</dbReference>
<dbReference type="PANTHER" id="PTHR36842">
    <property type="entry name" value="PROTEIN TOLB HOMOLOG"/>
    <property type="match status" value="1"/>
</dbReference>
<dbReference type="Pfam" id="PF07676">
    <property type="entry name" value="PD40"/>
    <property type="match status" value="5"/>
</dbReference>
<dbReference type="Pfam" id="PF04052">
    <property type="entry name" value="TolB_N"/>
    <property type="match status" value="1"/>
</dbReference>
<dbReference type="SUPFAM" id="SSF52964">
    <property type="entry name" value="TolB, N-terminal domain"/>
    <property type="match status" value="1"/>
</dbReference>
<dbReference type="SUPFAM" id="SSF69304">
    <property type="entry name" value="Tricorn protease N-terminal domain"/>
    <property type="match status" value="1"/>
</dbReference>
<evidence type="ECO:0000255" key="1">
    <source>
        <dbReference type="HAMAP-Rule" id="MF_00671"/>
    </source>
</evidence>
<gene>
    <name evidence="1" type="primary">tolB</name>
    <name type="ordered locus">Bphyt_0759</name>
</gene>
<accession>B2T077</accession>
<comment type="function">
    <text evidence="1">Part of the Tol-Pal system, which plays a role in outer membrane invagination during cell division and is important for maintaining outer membrane integrity.</text>
</comment>
<comment type="subunit">
    <text evidence="1">The Tol-Pal system is composed of five core proteins: the inner membrane proteins TolA, TolQ and TolR, the periplasmic protein TolB and the outer membrane protein Pal. They form a network linking the inner and outer membranes and the peptidoglycan layer.</text>
</comment>
<comment type="subcellular location">
    <subcellularLocation>
        <location evidence="1">Periplasm</location>
    </subcellularLocation>
</comment>
<comment type="similarity">
    <text evidence="1">Belongs to the TolB family.</text>
</comment>
<keyword id="KW-0131">Cell cycle</keyword>
<keyword id="KW-0132">Cell division</keyword>
<keyword id="KW-0574">Periplasm</keyword>
<keyword id="KW-0732">Signal</keyword>
<organism>
    <name type="scientific">Paraburkholderia phytofirmans (strain DSM 17436 / LMG 22146 / PsJN)</name>
    <name type="common">Burkholderia phytofirmans</name>
    <dbReference type="NCBI Taxonomy" id="398527"/>
    <lineage>
        <taxon>Bacteria</taxon>
        <taxon>Pseudomonadati</taxon>
        <taxon>Pseudomonadota</taxon>
        <taxon>Betaproteobacteria</taxon>
        <taxon>Burkholderiales</taxon>
        <taxon>Burkholderiaceae</taxon>
        <taxon>Paraburkholderia</taxon>
    </lineage>
</organism>
<name>TOLB_PARPJ</name>
<protein>
    <recommendedName>
        <fullName evidence="1">Tol-Pal system protein TolB</fullName>
    </recommendedName>
</protein>
<proteinExistence type="inferred from homology"/>
<reference key="1">
    <citation type="journal article" date="2011" name="J. Bacteriol.">
        <title>Complete genome sequence of the plant growth-promoting endophyte Burkholderia phytofirmans strain PsJN.</title>
        <authorList>
            <person name="Weilharter A."/>
            <person name="Mitter B."/>
            <person name="Shin M.V."/>
            <person name="Chain P.S."/>
            <person name="Nowak J."/>
            <person name="Sessitsch A."/>
        </authorList>
    </citation>
    <scope>NUCLEOTIDE SEQUENCE [LARGE SCALE GENOMIC DNA]</scope>
    <source>
        <strain>DSM 17436 / LMG 22146 / PsJN</strain>
    </source>
</reference>
<sequence>MSLMTKLGLRTLVASCLIAVGGAAHAQLNVLVTGVGSTQFPIATANFANEANSPQQVSTIVRQDLQRSGKFTNIDAGSTPVAETDSVDLGSWKAKGANAFVSGSVNRLPNGQYEVRFKLYDTVKGESLGGLVLVSPESGLRMSAHKVADYIYAKLMGGRGVFATRLSYVIKTGGRYQLQISDSDGQDAHIALSSPEPIISPAWSPDGTKVAYVSFEKKKPIVYIHDLPTGRRVVVSDQKGNNSAPAWSPDGRTLAVALSRTGNTQIFAVNADGSGLRRLTQGSSIDTEPCFSPDGQSIYFTSDRGGQPQIYKMSAQGENAGAAQRVTFTGSYNTSPRVSPDGKQLAYISRVGGGFKLYIQDLQGNTATGLTDTTHDESPSFAANGQYILYATQVNGRGVLAAVSTDGRTRQVLSVQGGSVREPSWGPFMQ</sequence>
<feature type="signal peptide" evidence="1">
    <location>
        <begin position="1"/>
        <end position="26"/>
    </location>
</feature>
<feature type="chain" id="PRO_5000367960" description="Tol-Pal system protein TolB" evidence="1">
    <location>
        <begin position="27"/>
        <end position="430"/>
    </location>
</feature>